<comment type="function">
    <text evidence="2">Cell wall formation.</text>
</comment>
<comment type="catalytic activity">
    <reaction evidence="2">
        <text>2 D-alanine + ATP = D-alanyl-D-alanine + ADP + phosphate + H(+)</text>
        <dbReference type="Rhea" id="RHEA:11224"/>
        <dbReference type="ChEBI" id="CHEBI:15378"/>
        <dbReference type="ChEBI" id="CHEBI:30616"/>
        <dbReference type="ChEBI" id="CHEBI:43474"/>
        <dbReference type="ChEBI" id="CHEBI:57416"/>
        <dbReference type="ChEBI" id="CHEBI:57822"/>
        <dbReference type="ChEBI" id="CHEBI:456216"/>
        <dbReference type="EC" id="6.3.2.4"/>
    </reaction>
</comment>
<comment type="cofactor">
    <cofactor evidence="1">
        <name>Mg(2+)</name>
        <dbReference type="ChEBI" id="CHEBI:18420"/>
    </cofactor>
    <cofactor evidence="1">
        <name>Mn(2+)</name>
        <dbReference type="ChEBI" id="CHEBI:29035"/>
    </cofactor>
    <text evidence="1">Binds 2 magnesium or manganese ions per subunit.</text>
</comment>
<comment type="pathway">
    <text evidence="2">Cell wall biogenesis; peptidoglycan biosynthesis.</text>
</comment>
<comment type="subcellular location">
    <subcellularLocation>
        <location evidence="2">Cytoplasm</location>
    </subcellularLocation>
</comment>
<comment type="similarity">
    <text evidence="2">Belongs to the D-alanine--D-alanine ligase family.</text>
</comment>
<protein>
    <recommendedName>
        <fullName evidence="2">D-alanine--D-alanine ligase</fullName>
        <ecNumber evidence="2">6.3.2.4</ecNumber>
    </recommendedName>
    <alternativeName>
        <fullName evidence="2">D-Ala-D-Ala ligase</fullName>
    </alternativeName>
    <alternativeName>
        <fullName evidence="2">D-alanylalanine synthetase</fullName>
    </alternativeName>
</protein>
<name>DDL_SYNY3</name>
<feature type="chain" id="PRO_0000177895" description="D-alanine--D-alanine ligase">
    <location>
        <begin position="1"/>
        <end position="354"/>
    </location>
</feature>
<feature type="domain" description="ATP-grasp" evidence="2">
    <location>
        <begin position="132"/>
        <end position="342"/>
    </location>
</feature>
<feature type="binding site" evidence="2">
    <location>
        <begin position="168"/>
        <end position="223"/>
    </location>
    <ligand>
        <name>ATP</name>
        <dbReference type="ChEBI" id="CHEBI:30616"/>
    </ligand>
</feature>
<feature type="binding site" evidence="2">
    <location>
        <position position="295"/>
    </location>
    <ligand>
        <name>Mg(2+)</name>
        <dbReference type="ChEBI" id="CHEBI:18420"/>
        <label>1</label>
    </ligand>
</feature>
<feature type="binding site" evidence="2">
    <location>
        <position position="309"/>
    </location>
    <ligand>
        <name>Mg(2+)</name>
        <dbReference type="ChEBI" id="CHEBI:18420"/>
        <label>1</label>
    </ligand>
</feature>
<feature type="binding site" evidence="2">
    <location>
        <position position="309"/>
    </location>
    <ligand>
        <name>Mg(2+)</name>
        <dbReference type="ChEBI" id="CHEBI:18420"/>
        <label>2</label>
    </ligand>
</feature>
<feature type="binding site" evidence="2">
    <location>
        <position position="311"/>
    </location>
    <ligand>
        <name>Mg(2+)</name>
        <dbReference type="ChEBI" id="CHEBI:18420"/>
        <label>2</label>
    </ligand>
</feature>
<keyword id="KW-0067">ATP-binding</keyword>
<keyword id="KW-0133">Cell shape</keyword>
<keyword id="KW-0961">Cell wall biogenesis/degradation</keyword>
<keyword id="KW-0963">Cytoplasm</keyword>
<keyword id="KW-0436">Ligase</keyword>
<keyword id="KW-0460">Magnesium</keyword>
<keyword id="KW-0464">Manganese</keyword>
<keyword id="KW-0479">Metal-binding</keyword>
<keyword id="KW-0547">Nucleotide-binding</keyword>
<keyword id="KW-0573">Peptidoglycan synthesis</keyword>
<keyword id="KW-1185">Reference proteome</keyword>
<dbReference type="EC" id="6.3.2.4" evidence="2"/>
<dbReference type="EMBL" id="BA000022">
    <property type="protein sequence ID" value="BAA17677.1"/>
    <property type="molecule type" value="Genomic_DNA"/>
</dbReference>
<dbReference type="PIR" id="S77119">
    <property type="entry name" value="S77119"/>
</dbReference>
<dbReference type="SMR" id="P73632"/>
<dbReference type="FunCoup" id="P73632">
    <property type="interactions" value="296"/>
</dbReference>
<dbReference type="IntAct" id="P73632">
    <property type="interactions" value="2"/>
</dbReference>
<dbReference type="STRING" id="1148.gene:10498544"/>
<dbReference type="PaxDb" id="1148-1652758"/>
<dbReference type="EnsemblBacteria" id="BAA17677">
    <property type="protein sequence ID" value="BAA17677"/>
    <property type="gene ID" value="BAA17677"/>
</dbReference>
<dbReference type="KEGG" id="syn:slr1874"/>
<dbReference type="eggNOG" id="COG1181">
    <property type="taxonomic scope" value="Bacteria"/>
</dbReference>
<dbReference type="InParanoid" id="P73632"/>
<dbReference type="PhylomeDB" id="P73632"/>
<dbReference type="UniPathway" id="UPA00219"/>
<dbReference type="Proteomes" id="UP000001425">
    <property type="component" value="Chromosome"/>
</dbReference>
<dbReference type="GO" id="GO:0005829">
    <property type="term" value="C:cytosol"/>
    <property type="evidence" value="ECO:0000318"/>
    <property type="project" value="GO_Central"/>
</dbReference>
<dbReference type="GO" id="GO:0005524">
    <property type="term" value="F:ATP binding"/>
    <property type="evidence" value="ECO:0007669"/>
    <property type="project" value="UniProtKB-KW"/>
</dbReference>
<dbReference type="GO" id="GO:0008716">
    <property type="term" value="F:D-alanine-D-alanine ligase activity"/>
    <property type="evidence" value="ECO:0000318"/>
    <property type="project" value="GO_Central"/>
</dbReference>
<dbReference type="GO" id="GO:0046872">
    <property type="term" value="F:metal ion binding"/>
    <property type="evidence" value="ECO:0007669"/>
    <property type="project" value="UniProtKB-KW"/>
</dbReference>
<dbReference type="GO" id="GO:0071555">
    <property type="term" value="P:cell wall organization"/>
    <property type="evidence" value="ECO:0007669"/>
    <property type="project" value="UniProtKB-KW"/>
</dbReference>
<dbReference type="GO" id="GO:0009252">
    <property type="term" value="P:peptidoglycan biosynthetic process"/>
    <property type="evidence" value="ECO:0000318"/>
    <property type="project" value="GO_Central"/>
</dbReference>
<dbReference type="GO" id="GO:0008360">
    <property type="term" value="P:regulation of cell shape"/>
    <property type="evidence" value="ECO:0007669"/>
    <property type="project" value="UniProtKB-KW"/>
</dbReference>
<dbReference type="FunFam" id="3.30.1490.20:FF:000007">
    <property type="entry name" value="D-alanine--D-alanine ligase"/>
    <property type="match status" value="1"/>
</dbReference>
<dbReference type="FunFam" id="3.30.470.20:FF:000008">
    <property type="entry name" value="D-alanine--D-alanine ligase"/>
    <property type="match status" value="1"/>
</dbReference>
<dbReference type="Gene3D" id="3.40.50.20">
    <property type="match status" value="1"/>
</dbReference>
<dbReference type="Gene3D" id="3.30.1490.20">
    <property type="entry name" value="ATP-grasp fold, A domain"/>
    <property type="match status" value="1"/>
</dbReference>
<dbReference type="Gene3D" id="3.30.470.20">
    <property type="entry name" value="ATP-grasp fold, B domain"/>
    <property type="match status" value="1"/>
</dbReference>
<dbReference type="HAMAP" id="MF_00047">
    <property type="entry name" value="Dala_Dala_lig"/>
    <property type="match status" value="1"/>
</dbReference>
<dbReference type="InterPro" id="IPR011761">
    <property type="entry name" value="ATP-grasp"/>
</dbReference>
<dbReference type="InterPro" id="IPR013815">
    <property type="entry name" value="ATP_grasp_subdomain_1"/>
</dbReference>
<dbReference type="InterPro" id="IPR000291">
    <property type="entry name" value="D-Ala_lig_Van_CS"/>
</dbReference>
<dbReference type="InterPro" id="IPR005905">
    <property type="entry name" value="D_ala_D_ala"/>
</dbReference>
<dbReference type="InterPro" id="IPR011095">
    <property type="entry name" value="Dala_Dala_lig_C"/>
</dbReference>
<dbReference type="InterPro" id="IPR011127">
    <property type="entry name" value="Dala_Dala_lig_N"/>
</dbReference>
<dbReference type="InterPro" id="IPR016185">
    <property type="entry name" value="PreATP-grasp_dom_sf"/>
</dbReference>
<dbReference type="NCBIfam" id="TIGR01205">
    <property type="entry name" value="D_ala_D_alaTIGR"/>
    <property type="match status" value="1"/>
</dbReference>
<dbReference type="NCBIfam" id="NF002528">
    <property type="entry name" value="PRK01966.1-4"/>
    <property type="match status" value="1"/>
</dbReference>
<dbReference type="PANTHER" id="PTHR23132">
    <property type="entry name" value="D-ALANINE--D-ALANINE LIGASE"/>
    <property type="match status" value="1"/>
</dbReference>
<dbReference type="PANTHER" id="PTHR23132:SF25">
    <property type="entry name" value="D-ALANINE--D-ALANINE LIGASE A"/>
    <property type="match status" value="1"/>
</dbReference>
<dbReference type="Pfam" id="PF07478">
    <property type="entry name" value="Dala_Dala_lig_C"/>
    <property type="match status" value="1"/>
</dbReference>
<dbReference type="Pfam" id="PF01820">
    <property type="entry name" value="Dala_Dala_lig_N"/>
    <property type="match status" value="1"/>
</dbReference>
<dbReference type="PIRSF" id="PIRSF039102">
    <property type="entry name" value="Ddl/VanB"/>
    <property type="match status" value="1"/>
</dbReference>
<dbReference type="SUPFAM" id="SSF56059">
    <property type="entry name" value="Glutathione synthetase ATP-binding domain-like"/>
    <property type="match status" value="1"/>
</dbReference>
<dbReference type="SUPFAM" id="SSF52440">
    <property type="entry name" value="PreATP-grasp domain"/>
    <property type="match status" value="1"/>
</dbReference>
<dbReference type="PROSITE" id="PS50975">
    <property type="entry name" value="ATP_GRASP"/>
    <property type="match status" value="1"/>
</dbReference>
<dbReference type="PROSITE" id="PS00843">
    <property type="entry name" value="DALA_DALA_LIGASE_1"/>
    <property type="match status" value="1"/>
</dbReference>
<dbReference type="PROSITE" id="PS00844">
    <property type="entry name" value="DALA_DALA_LIGASE_2"/>
    <property type="match status" value="1"/>
</dbReference>
<proteinExistence type="inferred from homology"/>
<organism>
    <name type="scientific">Synechocystis sp. (strain ATCC 27184 / PCC 6803 / Kazusa)</name>
    <dbReference type="NCBI Taxonomy" id="1111708"/>
    <lineage>
        <taxon>Bacteria</taxon>
        <taxon>Bacillati</taxon>
        <taxon>Cyanobacteriota</taxon>
        <taxon>Cyanophyceae</taxon>
        <taxon>Synechococcales</taxon>
        <taxon>Merismopediaceae</taxon>
        <taxon>Synechocystis</taxon>
    </lineage>
</organism>
<evidence type="ECO:0000250" key="1"/>
<evidence type="ECO:0000255" key="2">
    <source>
        <dbReference type="HAMAP-Rule" id="MF_00047"/>
    </source>
</evidence>
<sequence length="354" mass="38774">MRVGLLFGGCSGEHEVSIKSAQAIAKALASDDNQTKYQVSPFYIQKNGVWLGPDVSQQVLDQGVPWGDQPVTAGQRWQFPPEAARMEVWFPILHGPNGEDGTVQGLFSLMQVPYVGSGVLGSCVGMDKLAMKMVFERAGLPQVNYMGVERGEIWSNPCVFPALCEKIEAQVGYPCFVKPANLGSSVGIAKVRNRSELEAALDNAASYDRRIIVEAGLTDIREVECAVLGNENPQASVVGEITYDSDFYDYETKYTDGRSQMHIPANLPKAVVNQIQTMAIQAFKAVDAAGLGRLDFFYQPTTGQIVINEINTLPGFTAFSMYPELWRASGVEFPSLVDRLLQLALDYHGRPGHQ</sequence>
<accession>P73632</accession>
<reference key="1">
    <citation type="journal article" date="1996" name="DNA Res.">
        <title>Sequence analysis of the genome of the unicellular cyanobacterium Synechocystis sp. strain PCC6803. II. Sequence determination of the entire genome and assignment of potential protein-coding regions.</title>
        <authorList>
            <person name="Kaneko T."/>
            <person name="Sato S."/>
            <person name="Kotani H."/>
            <person name="Tanaka A."/>
            <person name="Asamizu E."/>
            <person name="Nakamura Y."/>
            <person name="Miyajima N."/>
            <person name="Hirosawa M."/>
            <person name="Sugiura M."/>
            <person name="Sasamoto S."/>
            <person name="Kimura T."/>
            <person name="Hosouchi T."/>
            <person name="Matsuno A."/>
            <person name="Muraki A."/>
            <person name="Nakazaki N."/>
            <person name="Naruo K."/>
            <person name="Okumura S."/>
            <person name="Shimpo S."/>
            <person name="Takeuchi C."/>
            <person name="Wada T."/>
            <person name="Watanabe A."/>
            <person name="Yamada M."/>
            <person name="Yasuda M."/>
            <person name="Tabata S."/>
        </authorList>
    </citation>
    <scope>NUCLEOTIDE SEQUENCE [LARGE SCALE GENOMIC DNA]</scope>
    <source>
        <strain>ATCC 27184 / PCC 6803 / Kazusa</strain>
    </source>
</reference>
<gene>
    <name evidence="2" type="primary">ddl</name>
    <name type="synonym">ddlA</name>
    <name type="ordered locus">slr1874</name>
</gene>